<feature type="chain" id="PRO_0000176501" description="Asparagine--tRNA ligase, cytoplasmic">
    <location>
        <begin position="1"/>
        <end position="554"/>
    </location>
</feature>
<gene>
    <name evidence="2" type="primary">DED81</name>
    <name type="ordered locus">YHR019C</name>
</gene>
<evidence type="ECO:0000269" key="1">
    <source>
    </source>
</evidence>
<evidence type="ECO:0000303" key="2">
    <source>
    </source>
</evidence>
<evidence type="ECO:0000305" key="3"/>
<evidence type="ECO:0000305" key="4">
    <source>
    </source>
</evidence>
<accession>P38707</accession>
<accession>D3DKW4</accession>
<keyword id="KW-0030">Aminoacyl-tRNA synthetase</keyword>
<keyword id="KW-0067">ATP-binding</keyword>
<keyword id="KW-0963">Cytoplasm</keyword>
<keyword id="KW-0436">Ligase</keyword>
<keyword id="KW-0547">Nucleotide-binding</keyword>
<keyword id="KW-0648">Protein biosynthesis</keyword>
<keyword id="KW-1185">Reference proteome</keyword>
<organism>
    <name type="scientific">Saccharomyces cerevisiae (strain ATCC 204508 / S288c)</name>
    <name type="common">Baker's yeast</name>
    <dbReference type="NCBI Taxonomy" id="559292"/>
    <lineage>
        <taxon>Eukaryota</taxon>
        <taxon>Fungi</taxon>
        <taxon>Dikarya</taxon>
        <taxon>Ascomycota</taxon>
        <taxon>Saccharomycotina</taxon>
        <taxon>Saccharomycetes</taxon>
        <taxon>Saccharomycetales</taxon>
        <taxon>Saccharomycetaceae</taxon>
        <taxon>Saccharomyces</taxon>
    </lineage>
</organism>
<proteinExistence type="evidence at protein level"/>
<sequence length="554" mass="62207">MSSLYIKEATGVDELTTAGSQDHPFKTPAYALFASQQKSDATEPKLFVFKTEDNEYQEISASALKKARKGCDGLKKKAVKQKEQELKKQQKEAENAAKQLSALNITIKEDESLPAAIKTRIYDSYSKVGQRVKVSGWIHRLRSNKKVIFVVLRDGSGFIQCVLSGDLALAQQTLDLTLESTVTLYGTIVKLPEGKTAPGGVELNVDYYEVVGLAPGGEDSFTNKIAEGSDPSLLLDQRHLALRGDALSAVMKVRAALLKSVRRVYDEEHLTEVTPPCMVQTQVEGGSTLFKMNYYGEEAYLTQSSQLYLETCLASLGDVYTIQESFRAEKSHTRRHLSEYTHIEAELAFLTFDDLLQHIETLIVKSVQYVLEDPIAGPLVKQLNPNFKAPKAPFMRLQYKDAITWLNEHDIKNEEGEDFKFGDDIAEAAERKMTDTIGVPIFLTRFPVEIKSFYMKRCSDDPRVTESVDVLMPNVGEITGGSMRIDDMDELMAGFKREGIDTDAYYWFIDQRKYGTCPHGGYGIGTERILAWLCDRFTVRDCSLYPRFSGRCKP</sequence>
<dbReference type="EC" id="6.1.1.22" evidence="1"/>
<dbReference type="EMBL" id="U10399">
    <property type="protein sequence ID" value="AAB68874.1"/>
    <property type="molecule type" value="Genomic_DNA"/>
</dbReference>
<dbReference type="EMBL" id="BK006934">
    <property type="protein sequence ID" value="DAA06708.1"/>
    <property type="molecule type" value="Genomic_DNA"/>
</dbReference>
<dbReference type="PIR" id="S46775">
    <property type="entry name" value="S46775"/>
</dbReference>
<dbReference type="RefSeq" id="NP_011883.1">
    <property type="nucleotide sequence ID" value="NM_001179149.1"/>
</dbReference>
<dbReference type="SMR" id="P38707"/>
<dbReference type="BioGRID" id="36448">
    <property type="interactions" value="346"/>
</dbReference>
<dbReference type="DIP" id="DIP-5575N"/>
<dbReference type="FunCoup" id="P38707">
    <property type="interactions" value="1102"/>
</dbReference>
<dbReference type="IntAct" id="P38707">
    <property type="interactions" value="125"/>
</dbReference>
<dbReference type="MINT" id="P38707"/>
<dbReference type="STRING" id="4932.YHR019C"/>
<dbReference type="iPTMnet" id="P38707"/>
<dbReference type="PaxDb" id="4932-YHR019C"/>
<dbReference type="PeptideAtlas" id="P38707"/>
<dbReference type="EnsemblFungi" id="YHR019C_mRNA">
    <property type="protein sequence ID" value="YHR019C"/>
    <property type="gene ID" value="YHR019C"/>
</dbReference>
<dbReference type="GeneID" id="856412"/>
<dbReference type="KEGG" id="sce:YHR019C"/>
<dbReference type="AGR" id="SGD:S000001061"/>
<dbReference type="SGD" id="S000001061">
    <property type="gene designation" value="DED81"/>
</dbReference>
<dbReference type="VEuPathDB" id="FungiDB:YHR019C"/>
<dbReference type="eggNOG" id="KOG0555">
    <property type="taxonomic scope" value="Eukaryota"/>
</dbReference>
<dbReference type="GeneTree" id="ENSGT01030000234618"/>
<dbReference type="HOGENOM" id="CLU_004553_2_10_1"/>
<dbReference type="InParanoid" id="P38707"/>
<dbReference type="OMA" id="DCCLYPR"/>
<dbReference type="OrthoDB" id="1931232at2759"/>
<dbReference type="BioCyc" id="YEAST:G3O-31080-MONOMER"/>
<dbReference type="BioGRID-ORCS" id="856412">
    <property type="hits" value="3 hits in 10 CRISPR screens"/>
</dbReference>
<dbReference type="PRO" id="PR:P38707"/>
<dbReference type="Proteomes" id="UP000002311">
    <property type="component" value="Chromosome VIII"/>
</dbReference>
<dbReference type="RNAct" id="P38707">
    <property type="molecule type" value="protein"/>
</dbReference>
<dbReference type="GO" id="GO:0005737">
    <property type="term" value="C:cytoplasm"/>
    <property type="evidence" value="ECO:0000318"/>
    <property type="project" value="GO_Central"/>
</dbReference>
<dbReference type="GO" id="GO:0005829">
    <property type="term" value="C:cytosol"/>
    <property type="evidence" value="ECO:0000305"/>
    <property type="project" value="SGD"/>
</dbReference>
<dbReference type="GO" id="GO:0004816">
    <property type="term" value="F:asparagine-tRNA ligase activity"/>
    <property type="evidence" value="ECO:0000314"/>
    <property type="project" value="SGD"/>
</dbReference>
<dbReference type="GO" id="GO:0005524">
    <property type="term" value="F:ATP binding"/>
    <property type="evidence" value="ECO:0007669"/>
    <property type="project" value="UniProtKB-KW"/>
</dbReference>
<dbReference type="GO" id="GO:1990825">
    <property type="term" value="F:sequence-specific mRNA binding"/>
    <property type="evidence" value="ECO:0000314"/>
    <property type="project" value="SGD"/>
</dbReference>
<dbReference type="GO" id="GO:0006421">
    <property type="term" value="P:asparaginyl-tRNA aminoacylation"/>
    <property type="evidence" value="ECO:0000314"/>
    <property type="project" value="SGD"/>
</dbReference>
<dbReference type="CDD" id="cd04323">
    <property type="entry name" value="AsnRS_cyto_like_N"/>
    <property type="match status" value="1"/>
</dbReference>
<dbReference type="CDD" id="cd00776">
    <property type="entry name" value="AsxRS_core"/>
    <property type="match status" value="1"/>
</dbReference>
<dbReference type="FunFam" id="2.40.50.140:FF:000151">
    <property type="entry name" value="Asparagine--tRNA ligase, cytoplasmic"/>
    <property type="match status" value="1"/>
</dbReference>
<dbReference type="FunFam" id="3.30.930.10:FF:000040">
    <property type="entry name" value="Asparagine--tRNA ligase, cytoplasmic"/>
    <property type="match status" value="1"/>
</dbReference>
<dbReference type="FunFam" id="3.30.1910.20:FF:000002">
    <property type="entry name" value="Asparaginyl-tRNA synthetase"/>
    <property type="match status" value="1"/>
</dbReference>
<dbReference type="Gene3D" id="3.30.1910.20">
    <property type="entry name" value="asparaginyl-tRNA synthetase, N-terminal domain"/>
    <property type="match status" value="1"/>
</dbReference>
<dbReference type="Gene3D" id="3.30.930.10">
    <property type="entry name" value="Bira Bifunctional Protein, Domain 2"/>
    <property type="match status" value="1"/>
</dbReference>
<dbReference type="Gene3D" id="2.40.50.140">
    <property type="entry name" value="Nucleic acid-binding proteins"/>
    <property type="match status" value="1"/>
</dbReference>
<dbReference type="InterPro" id="IPR004364">
    <property type="entry name" value="Aa-tRNA-synt_II"/>
</dbReference>
<dbReference type="InterPro" id="IPR006195">
    <property type="entry name" value="aa-tRNA-synth_II"/>
</dbReference>
<dbReference type="InterPro" id="IPR045864">
    <property type="entry name" value="aa-tRNA-synth_II/BPL/LPL"/>
</dbReference>
<dbReference type="InterPro" id="IPR004522">
    <property type="entry name" value="Asn-tRNA-ligase"/>
</dbReference>
<dbReference type="InterPro" id="IPR048952">
    <property type="entry name" value="AsnRS_N"/>
</dbReference>
<dbReference type="InterPro" id="IPR002312">
    <property type="entry name" value="Asp/Asn-tRNA-synth_IIb"/>
</dbReference>
<dbReference type="InterPro" id="IPR012340">
    <property type="entry name" value="NA-bd_OB-fold"/>
</dbReference>
<dbReference type="InterPro" id="IPR004365">
    <property type="entry name" value="NA-bd_OB_tRNA"/>
</dbReference>
<dbReference type="NCBIfam" id="TIGR00457">
    <property type="entry name" value="asnS"/>
    <property type="match status" value="1"/>
</dbReference>
<dbReference type="PANTHER" id="PTHR22594:SF16">
    <property type="entry name" value="ASPARAGINE--TRNA LIGASE, CYTOPLASMIC"/>
    <property type="match status" value="1"/>
</dbReference>
<dbReference type="PANTHER" id="PTHR22594">
    <property type="entry name" value="ASPARTYL/LYSYL-TRNA SYNTHETASE"/>
    <property type="match status" value="1"/>
</dbReference>
<dbReference type="Pfam" id="PF20917">
    <property type="entry name" value="AsnRS_N"/>
    <property type="match status" value="1"/>
</dbReference>
<dbReference type="Pfam" id="PF00152">
    <property type="entry name" value="tRNA-synt_2"/>
    <property type="match status" value="1"/>
</dbReference>
<dbReference type="Pfam" id="PF01336">
    <property type="entry name" value="tRNA_anti-codon"/>
    <property type="match status" value="1"/>
</dbReference>
<dbReference type="PRINTS" id="PR01042">
    <property type="entry name" value="TRNASYNTHASP"/>
</dbReference>
<dbReference type="SUPFAM" id="SSF55681">
    <property type="entry name" value="Class II aaRS and biotin synthetases"/>
    <property type="match status" value="1"/>
</dbReference>
<dbReference type="SUPFAM" id="SSF50249">
    <property type="entry name" value="Nucleic acid-binding proteins"/>
    <property type="match status" value="1"/>
</dbReference>
<dbReference type="PROSITE" id="PS50862">
    <property type="entry name" value="AA_TRNA_LIGASE_II"/>
    <property type="match status" value="1"/>
</dbReference>
<protein>
    <recommendedName>
        <fullName evidence="2">Asparagine--tRNA ligase, cytoplasmic</fullName>
        <ecNumber evidence="1">6.1.1.22</ecNumber>
    </recommendedName>
    <alternativeName>
        <fullName evidence="2">Asparaginyl-tRNA synthetase</fullName>
        <shortName evidence="2">AsnRS</shortName>
    </alternativeName>
</protein>
<comment type="function">
    <text evidence="1">Catalyzes the attachment of asparagine to tRNA(Asn) in a two-step reaction: asparagine is first activated by ATP to form Asn-AMP and then transferred to the acceptor end of tRNA(Asn).</text>
</comment>
<comment type="catalytic activity">
    <reaction evidence="1">
        <text>tRNA(Asn) + L-asparagine + ATP = L-asparaginyl-tRNA(Asn) + AMP + diphosphate + H(+)</text>
        <dbReference type="Rhea" id="RHEA:11180"/>
        <dbReference type="Rhea" id="RHEA-COMP:9659"/>
        <dbReference type="Rhea" id="RHEA-COMP:9674"/>
        <dbReference type="ChEBI" id="CHEBI:15378"/>
        <dbReference type="ChEBI" id="CHEBI:30616"/>
        <dbReference type="ChEBI" id="CHEBI:33019"/>
        <dbReference type="ChEBI" id="CHEBI:58048"/>
        <dbReference type="ChEBI" id="CHEBI:78442"/>
        <dbReference type="ChEBI" id="CHEBI:78515"/>
        <dbReference type="ChEBI" id="CHEBI:456215"/>
        <dbReference type="EC" id="6.1.1.22"/>
    </reaction>
</comment>
<comment type="subcellular location">
    <subcellularLocation>
        <location evidence="4">Cytoplasm</location>
        <location evidence="4">Cytosol</location>
    </subcellularLocation>
</comment>
<comment type="similarity">
    <text evidence="3">Belongs to the class-II aminoacyl-tRNA synthetase family.</text>
</comment>
<reference key="1">
    <citation type="journal article" date="1994" name="Science">
        <title>Complete nucleotide sequence of Saccharomyces cerevisiae chromosome VIII.</title>
        <authorList>
            <person name="Johnston M."/>
            <person name="Andrews S."/>
            <person name="Brinkman R."/>
            <person name="Cooper J."/>
            <person name="Ding H."/>
            <person name="Dover J."/>
            <person name="Du Z."/>
            <person name="Favello A."/>
            <person name="Fulton L."/>
            <person name="Gattung S."/>
            <person name="Geisel C."/>
            <person name="Kirsten J."/>
            <person name="Kucaba T."/>
            <person name="Hillier L.W."/>
            <person name="Jier M."/>
            <person name="Johnston L."/>
            <person name="Langston Y."/>
            <person name="Latreille P."/>
            <person name="Louis E.J."/>
            <person name="Macri C."/>
            <person name="Mardis E."/>
            <person name="Menezes S."/>
            <person name="Mouser L."/>
            <person name="Nhan M."/>
            <person name="Rifkin L."/>
            <person name="Riles L."/>
            <person name="St Peter H."/>
            <person name="Trevaskis E."/>
            <person name="Vaughan K."/>
            <person name="Vignati D."/>
            <person name="Wilcox L."/>
            <person name="Wohldman P."/>
            <person name="Waterston R."/>
            <person name="Wilson R."/>
            <person name="Vaudin M."/>
        </authorList>
    </citation>
    <scope>NUCLEOTIDE SEQUENCE [LARGE SCALE GENOMIC DNA]</scope>
    <source>
        <strain>ATCC 204508 / S288c</strain>
    </source>
</reference>
<reference key="2">
    <citation type="journal article" date="2014" name="G3 (Bethesda)">
        <title>The reference genome sequence of Saccharomyces cerevisiae: Then and now.</title>
        <authorList>
            <person name="Engel S.R."/>
            <person name="Dietrich F.S."/>
            <person name="Fisk D.G."/>
            <person name="Binkley G."/>
            <person name="Balakrishnan R."/>
            <person name="Costanzo M.C."/>
            <person name="Dwight S.S."/>
            <person name="Hitz B.C."/>
            <person name="Karra K."/>
            <person name="Nash R.S."/>
            <person name="Weng S."/>
            <person name="Wong E.D."/>
            <person name="Lloyd P."/>
            <person name="Skrzypek M.S."/>
            <person name="Miyasato S.R."/>
            <person name="Simison M."/>
            <person name="Cherry J.M."/>
        </authorList>
    </citation>
    <scope>GENOME REANNOTATION</scope>
    <source>
        <strain>ATCC 204508 / S288c</strain>
    </source>
</reference>
<reference key="3">
    <citation type="journal article" date="1998" name="Yeast">
        <title>Identification of YHR019 in Saccharomyces cerevisiae chromosome VIII as the gene for the cytosolic asparaginyl-tRNA synthetase.</title>
        <authorList>
            <person name="Landrieu I."/>
            <person name="Vandenbol M."/>
            <person name="Leberman R."/>
            <person name="Portetelle D."/>
            <person name="Hartlein M."/>
        </authorList>
    </citation>
    <scope>FUNCTION</scope>
    <scope>CATALYTIC ACTIVITY</scope>
</reference>
<reference key="4">
    <citation type="journal article" date="2003" name="Mol. Cell">
        <title>Assigning function to yeast proteins by integration of technologies.</title>
        <authorList>
            <person name="Hazbun T.R."/>
            <person name="Malmstroem L."/>
            <person name="Anderson S."/>
            <person name="Graczyk B.J."/>
            <person name="Fox B."/>
            <person name="Riffle M."/>
            <person name="Sundin B.A."/>
            <person name="Aranda J.D."/>
            <person name="McDonald W.H."/>
            <person name="Chiu C.-H."/>
            <person name="Snydsman B.E."/>
            <person name="Bradley P."/>
            <person name="Muller E.G.D."/>
            <person name="Fields S."/>
            <person name="Baker D."/>
            <person name="Yates J.R. III"/>
            <person name="Davis T.N."/>
        </authorList>
    </citation>
    <scope>IDENTIFICATION BY MASS SPECTROMETRY</scope>
</reference>
<reference key="5">
    <citation type="journal article" date="2008" name="Mol. Cell. Proteomics">
        <title>A multidimensional chromatography technology for in-depth phosphoproteome analysis.</title>
        <authorList>
            <person name="Albuquerque C.P."/>
            <person name="Smolka M.B."/>
            <person name="Payne S.H."/>
            <person name="Bafna V."/>
            <person name="Eng J."/>
            <person name="Zhou H."/>
        </authorList>
    </citation>
    <scope>IDENTIFICATION BY MASS SPECTROMETRY [LARGE SCALE ANALYSIS]</scope>
</reference>
<reference key="6">
    <citation type="journal article" date="2009" name="Science">
        <title>Global analysis of Cdk1 substrate phosphorylation sites provides insights into evolution.</title>
        <authorList>
            <person name="Holt L.J."/>
            <person name="Tuch B.B."/>
            <person name="Villen J."/>
            <person name="Johnson A.D."/>
            <person name="Gygi S.P."/>
            <person name="Morgan D.O."/>
        </authorList>
    </citation>
    <scope>IDENTIFICATION BY MASS SPECTROMETRY [LARGE SCALE ANALYSIS]</scope>
</reference>
<name>SYNC_YEAST</name>